<dbReference type="EC" id="3.4.14.5"/>
<dbReference type="EMBL" id="GL537929">
    <property type="protein sequence ID" value="EFQ85356.1"/>
    <property type="molecule type" value="Genomic_DNA"/>
</dbReference>
<dbReference type="RefSeq" id="XP_003306558.1">
    <property type="nucleotide sequence ID" value="XM_003306510.1"/>
</dbReference>
<dbReference type="SMR" id="E3S9K3"/>
<dbReference type="STRING" id="861557.E3S9K3"/>
<dbReference type="ESTHER" id="pyrtr-dapb">
    <property type="family name" value="DPP4N_Peptidase_S9"/>
</dbReference>
<dbReference type="GlyCosmos" id="E3S9K3">
    <property type="glycosylation" value="2 sites, No reported glycans"/>
</dbReference>
<dbReference type="EnsemblFungi" id="EFQ85356">
    <property type="protein sequence ID" value="EFQ85356"/>
    <property type="gene ID" value="PTT_19734"/>
</dbReference>
<dbReference type="KEGG" id="pte:PTT_19734"/>
<dbReference type="eggNOG" id="KOG2100">
    <property type="taxonomic scope" value="Eukaryota"/>
</dbReference>
<dbReference type="HOGENOM" id="CLU_006105_0_1_1"/>
<dbReference type="OrthoDB" id="16520at2759"/>
<dbReference type="Proteomes" id="UP000001067">
    <property type="component" value="Unassembled WGS sequence"/>
</dbReference>
<dbReference type="GO" id="GO:0000329">
    <property type="term" value="C:fungal-type vacuole membrane"/>
    <property type="evidence" value="ECO:0007669"/>
    <property type="project" value="EnsemblFungi"/>
</dbReference>
<dbReference type="GO" id="GO:0005886">
    <property type="term" value="C:plasma membrane"/>
    <property type="evidence" value="ECO:0007669"/>
    <property type="project" value="TreeGrafter"/>
</dbReference>
<dbReference type="GO" id="GO:0004177">
    <property type="term" value="F:aminopeptidase activity"/>
    <property type="evidence" value="ECO:0007669"/>
    <property type="project" value="UniProtKB-KW"/>
</dbReference>
<dbReference type="GO" id="GO:0008239">
    <property type="term" value="F:dipeptidyl-peptidase activity"/>
    <property type="evidence" value="ECO:0007669"/>
    <property type="project" value="UniProtKB-EC"/>
</dbReference>
<dbReference type="GO" id="GO:0008236">
    <property type="term" value="F:serine-type peptidase activity"/>
    <property type="evidence" value="ECO:0007669"/>
    <property type="project" value="UniProtKB-KW"/>
</dbReference>
<dbReference type="GO" id="GO:0006508">
    <property type="term" value="P:proteolysis"/>
    <property type="evidence" value="ECO:0007669"/>
    <property type="project" value="UniProtKB-KW"/>
</dbReference>
<dbReference type="FunFam" id="3.40.50.1820:FF:000003">
    <property type="entry name" value="Dipeptidyl peptidase 4"/>
    <property type="match status" value="1"/>
</dbReference>
<dbReference type="Gene3D" id="3.40.50.1820">
    <property type="entry name" value="alpha/beta hydrolase"/>
    <property type="match status" value="1"/>
</dbReference>
<dbReference type="Gene3D" id="2.140.10.30">
    <property type="entry name" value="Dipeptidylpeptidase IV, N-terminal domain"/>
    <property type="match status" value="1"/>
</dbReference>
<dbReference type="InterPro" id="IPR029058">
    <property type="entry name" value="AB_hydrolase_fold"/>
</dbReference>
<dbReference type="InterPro" id="IPR001375">
    <property type="entry name" value="Peptidase_S9_cat"/>
</dbReference>
<dbReference type="InterPro" id="IPR002469">
    <property type="entry name" value="Peptidase_S9B_N"/>
</dbReference>
<dbReference type="InterPro" id="IPR050278">
    <property type="entry name" value="Serine_Prot_S9B/DPPIV"/>
</dbReference>
<dbReference type="PANTHER" id="PTHR11731:SF200">
    <property type="entry name" value="DIPEPTIDYL PEPTIDASE 10, ISOFORM B"/>
    <property type="match status" value="1"/>
</dbReference>
<dbReference type="PANTHER" id="PTHR11731">
    <property type="entry name" value="PROTEASE FAMILY S9B,C DIPEPTIDYL-PEPTIDASE IV-RELATED"/>
    <property type="match status" value="1"/>
</dbReference>
<dbReference type="Pfam" id="PF00930">
    <property type="entry name" value="DPPIV_N"/>
    <property type="match status" value="1"/>
</dbReference>
<dbReference type="Pfam" id="PF00326">
    <property type="entry name" value="Peptidase_S9"/>
    <property type="match status" value="1"/>
</dbReference>
<dbReference type="SUPFAM" id="SSF53474">
    <property type="entry name" value="alpha/beta-Hydrolases"/>
    <property type="match status" value="1"/>
</dbReference>
<dbReference type="SUPFAM" id="SSF82171">
    <property type="entry name" value="DPP6 N-terminal domain-like"/>
    <property type="match status" value="1"/>
</dbReference>
<evidence type="ECO:0000250" key="1"/>
<evidence type="ECO:0000255" key="2"/>
<evidence type="ECO:0000256" key="3">
    <source>
        <dbReference type="SAM" id="MobiDB-lite"/>
    </source>
</evidence>
<evidence type="ECO:0000305" key="4"/>
<accession>E3S9K3</accession>
<organism>
    <name type="scientific">Pyrenophora teres f. teres (strain 0-1)</name>
    <name type="common">Barley net blotch fungus</name>
    <name type="synonym">Drechslera teres f. teres</name>
    <dbReference type="NCBI Taxonomy" id="861557"/>
    <lineage>
        <taxon>Eukaryota</taxon>
        <taxon>Fungi</taxon>
        <taxon>Dikarya</taxon>
        <taxon>Ascomycota</taxon>
        <taxon>Pezizomycotina</taxon>
        <taxon>Dothideomycetes</taxon>
        <taxon>Pleosporomycetidae</taxon>
        <taxon>Pleosporales</taxon>
        <taxon>Pleosporineae</taxon>
        <taxon>Pleosporaceae</taxon>
        <taxon>Pyrenophora</taxon>
    </lineage>
</organism>
<comment type="function">
    <text evidence="1">Type IV dipeptidyl-peptidase which removes N-terminal dipeptides sequentially from polypeptides having unsubstituted N-termini provided that the penultimate residue is proline.</text>
</comment>
<comment type="catalytic activity">
    <reaction>
        <text>Release of an N-terminal dipeptide, Xaa-Yaa-|-Zaa-, from a polypeptide, preferentially when Yaa is Pro, provided Zaa is neither Pro nor hydroxyproline.</text>
        <dbReference type="EC" id="3.4.14.5"/>
    </reaction>
</comment>
<comment type="subcellular location">
    <subcellularLocation>
        <location evidence="1">Vacuole membrane</location>
        <topology evidence="1">Single-pass type II membrane protein</topology>
    </subcellularLocation>
    <text evidence="1">Lysosome-like vacuoles.</text>
</comment>
<comment type="similarity">
    <text evidence="4">Belongs to the peptidase S9B family.</text>
</comment>
<feature type="chain" id="PRO_0000412161" description="Probable dipeptidyl-aminopeptidase B">
    <location>
        <begin position="1"/>
        <end position="907"/>
    </location>
</feature>
<feature type="topological domain" description="Cytoplasmic" evidence="2">
    <location>
        <begin position="1"/>
        <end position="93"/>
    </location>
</feature>
<feature type="transmembrane region" description="Helical; Signal-anchor for type II membrane protein" evidence="2">
    <location>
        <begin position="94"/>
        <end position="114"/>
    </location>
</feature>
<feature type="topological domain" description="Vacuolar" evidence="2">
    <location>
        <begin position="115"/>
        <end position="907"/>
    </location>
</feature>
<feature type="region of interest" description="Disordered" evidence="3">
    <location>
        <begin position="1"/>
        <end position="70"/>
    </location>
</feature>
<feature type="compositionally biased region" description="Basic and acidic residues" evidence="3">
    <location>
        <begin position="1"/>
        <end position="26"/>
    </location>
</feature>
<feature type="compositionally biased region" description="Low complexity" evidence="3">
    <location>
        <begin position="30"/>
        <end position="44"/>
    </location>
</feature>
<feature type="active site" description="Charge relay system" evidence="1">
    <location>
        <position position="751"/>
    </location>
</feature>
<feature type="active site" description="Charge relay system" evidence="1">
    <location>
        <position position="828"/>
    </location>
</feature>
<feature type="active site" description="Charge relay system" evidence="1">
    <location>
        <position position="861"/>
    </location>
</feature>
<feature type="glycosylation site" description="N-linked (GlcNAc...) asparagine" evidence="2">
    <location>
        <position position="560"/>
    </location>
</feature>
<feature type="glycosylation site" description="N-linked (GlcNAc...) asparagine" evidence="2">
    <location>
        <position position="805"/>
    </location>
</feature>
<keyword id="KW-0031">Aminopeptidase</keyword>
<keyword id="KW-0325">Glycoprotein</keyword>
<keyword id="KW-0378">Hydrolase</keyword>
<keyword id="KW-0472">Membrane</keyword>
<keyword id="KW-0645">Protease</keyword>
<keyword id="KW-1185">Reference proteome</keyword>
<keyword id="KW-0720">Serine protease</keyword>
<keyword id="KW-0735">Signal-anchor</keyword>
<keyword id="KW-0812">Transmembrane</keyword>
<keyword id="KW-1133">Transmembrane helix</keyword>
<keyword id="KW-0926">Vacuole</keyword>
<proteinExistence type="inferred from homology"/>
<gene>
    <name type="primary">dapB</name>
    <name type="ORF">PTT_19734</name>
</gene>
<sequence>MPRQRAPKEEEAELLTKQERSTRSSEDASDASVSSISTTSLVLEHINNPAINGTSRSRRGEKYTDEDDEAQEAFDVEDGRYKAPVAVDKKTRRWLWIVGIACVTGWALALVFFLMSGSYKHVSTRPHDPLASSTKGSGKKITMDDVFGGSFYAQQQSVKWIAGPNGEDGLLLEKNTGNAGYLVVEDIRNKGDGDSSAKKTKLMQKSSFDVDGKLVRPNEVWPSKDFKKVLVQSDFEKNWRHSGTGKYWIFDVATQTGEPLDPENQDGRVQLASLSPQSDAVVFTRDNNMYLRKLDSKEVIQITRDGGSELFYGIPDWVYEEEVFQGNSATWWSEDGKYIAFLRTDESTVPTYPVQYFVSRPSGNKPKAGEENYPEVRNIKYPKAGAPNPIVALQFYDVEKAEVFSVEIEDDFRDNNRLITEIVWAGKTKQVLVRETNRESDILKVVLMDVEKRTGKTVRTENVAELDGGWFEVSQKTTFVPADPDNGRKDDGYIDTIIHEGYDHIGYFTPLDNDKPVLLSQGEWEVVDAPSRVDLKNNMVYYVSTEKSSMERHAYSVFLNGTGTSEVVENSGSGYYEASFSAGGSYALITYQGPGIPWQKIISTPSNKDKFEKVLEENKHLDRFVREREMPILNYQTIDVDGFKLNVLERRPPHFNEKKKYPVLFYQYSGPNSQEVNKKFHVDFQAYVAANLGYIVVTVDGRGTGFLGRKLRCITRGNLGYYEAHDQIAAAKIWASKKYVDADRLAIWGWSFGGFNTLKTLEQDGGQTFKYGMAVAPVTDWRYYDSIYTERFMHMPQNNAAGYDNSTITDVASLAKNTRFLIMHGVADDNVHMQNTLTLLDRLDLAGVENYDVHVFPDSDHSIYFHNANRIVYDKLRWWLINAFNGEWAKIKTAEPKSQVDARLERR</sequence>
<reference key="1">
    <citation type="journal article" date="2010" name="Genome Biol.">
        <title>A first genome assembly of the barley fungal pathogen Pyrenophora teres f. teres.</title>
        <authorList>
            <person name="Ellwood S.R."/>
            <person name="Liu Z."/>
            <person name="Syme R.A."/>
            <person name="Lai Z."/>
            <person name="Hane J.K."/>
            <person name="Keiper F."/>
            <person name="Moffat C.S."/>
            <person name="Oliver R.P."/>
            <person name="Friesen T.L."/>
        </authorList>
    </citation>
    <scope>NUCLEOTIDE SEQUENCE [LARGE SCALE GENOMIC DNA]</scope>
    <source>
        <strain>0-1</strain>
    </source>
</reference>
<name>DAPB_PYRTT</name>
<protein>
    <recommendedName>
        <fullName>Probable dipeptidyl-aminopeptidase B</fullName>
        <shortName>DPAP B</shortName>
        <ecNumber>3.4.14.5</ecNumber>
    </recommendedName>
</protein>